<dbReference type="EC" id="5.6.2.4" evidence="1"/>
<dbReference type="EMBL" id="AE008384">
    <property type="protein sequence ID" value="AAM30121.1"/>
    <property type="molecule type" value="Genomic_DNA"/>
</dbReference>
<dbReference type="RefSeq" id="WP_011032378.1">
    <property type="nucleotide sequence ID" value="NC_003901.1"/>
</dbReference>
<dbReference type="SMR" id="Q8PZR7"/>
<dbReference type="KEGG" id="mma:MM_0425"/>
<dbReference type="PATRIC" id="fig|192952.21.peg.513"/>
<dbReference type="eggNOG" id="arCOG00553">
    <property type="taxonomic scope" value="Archaea"/>
</dbReference>
<dbReference type="HOGENOM" id="CLU_006553_3_0_2"/>
<dbReference type="Proteomes" id="UP000000595">
    <property type="component" value="Chromosome"/>
</dbReference>
<dbReference type="GO" id="GO:0043138">
    <property type="term" value="F:3'-5' DNA helicase activity"/>
    <property type="evidence" value="ECO:0007669"/>
    <property type="project" value="UniProtKB-UniRule"/>
</dbReference>
<dbReference type="GO" id="GO:0005524">
    <property type="term" value="F:ATP binding"/>
    <property type="evidence" value="ECO:0007669"/>
    <property type="project" value="UniProtKB-UniRule"/>
</dbReference>
<dbReference type="GO" id="GO:0016887">
    <property type="term" value="F:ATP hydrolysis activity"/>
    <property type="evidence" value="ECO:0007669"/>
    <property type="project" value="RHEA"/>
</dbReference>
<dbReference type="GO" id="GO:0003677">
    <property type="term" value="F:DNA binding"/>
    <property type="evidence" value="ECO:0007669"/>
    <property type="project" value="UniProtKB-UniRule"/>
</dbReference>
<dbReference type="GO" id="GO:0006281">
    <property type="term" value="P:DNA repair"/>
    <property type="evidence" value="ECO:0007669"/>
    <property type="project" value="UniProtKB-UniRule"/>
</dbReference>
<dbReference type="CDD" id="cd18028">
    <property type="entry name" value="DEXHc_archSki2"/>
    <property type="match status" value="1"/>
</dbReference>
<dbReference type="CDD" id="cd18795">
    <property type="entry name" value="SF2_C_Ski2"/>
    <property type="match status" value="1"/>
</dbReference>
<dbReference type="Gene3D" id="1.10.3380.30">
    <property type="match status" value="1"/>
</dbReference>
<dbReference type="Gene3D" id="1.10.150.20">
    <property type="entry name" value="5' to 3' exonuclease, C-terminal subdomain"/>
    <property type="match status" value="1"/>
</dbReference>
<dbReference type="Gene3D" id="3.40.50.300">
    <property type="entry name" value="P-loop containing nucleotide triphosphate hydrolases"/>
    <property type="match status" value="2"/>
</dbReference>
<dbReference type="HAMAP" id="MF_00442">
    <property type="entry name" value="Helicase_Hel308"/>
    <property type="match status" value="1"/>
</dbReference>
<dbReference type="InterPro" id="IPR011545">
    <property type="entry name" value="DEAD/DEAH_box_helicase_dom"/>
</dbReference>
<dbReference type="InterPro" id="IPR048772">
    <property type="entry name" value="Hel308-like_dom4"/>
</dbReference>
<dbReference type="InterPro" id="IPR050474">
    <property type="entry name" value="Hel308_SKI2-like"/>
</dbReference>
<dbReference type="InterPro" id="IPR014001">
    <property type="entry name" value="Helicase_ATP-bd"/>
</dbReference>
<dbReference type="InterPro" id="IPR001650">
    <property type="entry name" value="Helicase_C-like"/>
</dbReference>
<dbReference type="InterPro" id="IPR022965">
    <property type="entry name" value="Helicase_Hel308"/>
</dbReference>
<dbReference type="InterPro" id="IPR046931">
    <property type="entry name" value="HTH_61"/>
</dbReference>
<dbReference type="InterPro" id="IPR027417">
    <property type="entry name" value="P-loop_NTPase"/>
</dbReference>
<dbReference type="InterPro" id="IPR036390">
    <property type="entry name" value="WH_DNA-bd_sf"/>
</dbReference>
<dbReference type="NCBIfam" id="NF002654">
    <property type="entry name" value="PRK02362.1"/>
    <property type="match status" value="1"/>
</dbReference>
<dbReference type="PANTHER" id="PTHR47961:SF10">
    <property type="entry name" value="ATP-DEPENDENT DNA HELICASE HEL308"/>
    <property type="match status" value="1"/>
</dbReference>
<dbReference type="PANTHER" id="PTHR47961">
    <property type="entry name" value="DNA POLYMERASE THETA, PUTATIVE (AFU_ORTHOLOGUE AFUA_1G05260)-RELATED"/>
    <property type="match status" value="1"/>
</dbReference>
<dbReference type="Pfam" id="PF00270">
    <property type="entry name" value="DEAD"/>
    <property type="match status" value="1"/>
</dbReference>
<dbReference type="Pfam" id="PF00271">
    <property type="entry name" value="Helicase_C"/>
    <property type="match status" value="1"/>
</dbReference>
<dbReference type="Pfam" id="PF21280">
    <property type="entry name" value="Helicase_dom4_arc"/>
    <property type="match status" value="1"/>
</dbReference>
<dbReference type="Pfam" id="PF14520">
    <property type="entry name" value="HHH_5"/>
    <property type="match status" value="1"/>
</dbReference>
<dbReference type="Pfam" id="PF20470">
    <property type="entry name" value="HTH_61"/>
    <property type="match status" value="1"/>
</dbReference>
<dbReference type="SMART" id="SM00487">
    <property type="entry name" value="DEXDc"/>
    <property type="match status" value="1"/>
</dbReference>
<dbReference type="SMART" id="SM00490">
    <property type="entry name" value="HELICc"/>
    <property type="match status" value="1"/>
</dbReference>
<dbReference type="SUPFAM" id="SSF52540">
    <property type="entry name" value="P-loop containing nucleoside triphosphate hydrolases"/>
    <property type="match status" value="2"/>
</dbReference>
<dbReference type="SUPFAM" id="SSF158702">
    <property type="entry name" value="Sec63 N-terminal domain-like"/>
    <property type="match status" value="1"/>
</dbReference>
<dbReference type="SUPFAM" id="SSF46785">
    <property type="entry name" value="Winged helix' DNA-binding domain"/>
    <property type="match status" value="1"/>
</dbReference>
<dbReference type="PROSITE" id="PS51192">
    <property type="entry name" value="HELICASE_ATP_BIND_1"/>
    <property type="match status" value="1"/>
</dbReference>
<dbReference type="PROSITE" id="PS51194">
    <property type="entry name" value="HELICASE_CTER"/>
    <property type="match status" value="1"/>
</dbReference>
<accession>Q8PZR7</accession>
<evidence type="ECO:0000255" key="1">
    <source>
        <dbReference type="HAMAP-Rule" id="MF_00442"/>
    </source>
</evidence>
<reference key="1">
    <citation type="journal article" date="2002" name="J. Mol. Microbiol. Biotechnol.">
        <title>The genome of Methanosarcina mazei: evidence for lateral gene transfer between Bacteria and Archaea.</title>
        <authorList>
            <person name="Deppenmeier U."/>
            <person name="Johann A."/>
            <person name="Hartsch T."/>
            <person name="Merkl R."/>
            <person name="Schmitz R.A."/>
            <person name="Martinez-Arias R."/>
            <person name="Henne A."/>
            <person name="Wiezer A."/>
            <person name="Baeumer S."/>
            <person name="Jacobi C."/>
            <person name="Brueggemann H."/>
            <person name="Lienard T."/>
            <person name="Christmann A."/>
            <person name="Boemecke M."/>
            <person name="Steckel S."/>
            <person name="Bhattacharyya A."/>
            <person name="Lykidis A."/>
            <person name="Overbeek R."/>
            <person name="Klenk H.-P."/>
            <person name="Gunsalus R.P."/>
            <person name="Fritz H.-J."/>
            <person name="Gottschalk G."/>
        </authorList>
    </citation>
    <scope>NUCLEOTIDE SEQUENCE [LARGE SCALE GENOMIC DNA]</scope>
    <source>
        <strain>ATCC BAA-159 / DSM 3647 / Goe1 / Go1 / JCM 11833 / OCM 88</strain>
    </source>
</reference>
<protein>
    <recommendedName>
        <fullName evidence="1">ATP-dependent DNA helicase Hel308</fullName>
        <ecNumber evidence="1">5.6.2.4</ecNumber>
    </recommendedName>
    <alternativeName>
        <fullName evidence="1">DNA 3'-5' helicase Hel308</fullName>
    </alternativeName>
</protein>
<keyword id="KW-0067">ATP-binding</keyword>
<keyword id="KW-0227">DNA damage</keyword>
<keyword id="KW-0234">DNA repair</keyword>
<keyword id="KW-0238">DNA-binding</keyword>
<keyword id="KW-0347">Helicase</keyword>
<keyword id="KW-0378">Hydrolase</keyword>
<keyword id="KW-0413">Isomerase</keyword>
<keyword id="KW-0547">Nucleotide-binding</keyword>
<proteinExistence type="inferred from homology"/>
<comment type="function">
    <text evidence="1">DNA-dependent ATPase and 3'-5' DNA helicase that may be involved in repair of stalled replication forks.</text>
</comment>
<comment type="catalytic activity">
    <reaction evidence="1">
        <text>Couples ATP hydrolysis with the unwinding of duplex DNA by translocating in the 3'-5' direction.</text>
        <dbReference type="EC" id="5.6.2.4"/>
    </reaction>
</comment>
<comment type="catalytic activity">
    <reaction evidence="1">
        <text>ATP + H2O = ADP + phosphate + H(+)</text>
        <dbReference type="Rhea" id="RHEA:13065"/>
        <dbReference type="ChEBI" id="CHEBI:15377"/>
        <dbReference type="ChEBI" id="CHEBI:15378"/>
        <dbReference type="ChEBI" id="CHEBI:30616"/>
        <dbReference type="ChEBI" id="CHEBI:43474"/>
        <dbReference type="ChEBI" id="CHEBI:456216"/>
        <dbReference type="EC" id="5.6.2.4"/>
    </reaction>
</comment>
<comment type="subunit">
    <text evidence="1">Monomer.</text>
</comment>
<comment type="similarity">
    <text evidence="1">Belongs to the helicase family. Hel308 subfamily.</text>
</comment>
<feature type="chain" id="PRO_0000102107" description="ATP-dependent DNA helicase Hel308">
    <location>
        <begin position="1"/>
        <end position="730"/>
    </location>
</feature>
<feature type="domain" description="Helicase ATP-binding" evidence="1">
    <location>
        <begin position="33"/>
        <end position="199"/>
    </location>
</feature>
<feature type="domain" description="Helicase C-terminal" evidence="1">
    <location>
        <begin position="232"/>
        <end position="433"/>
    </location>
</feature>
<feature type="short sequence motif" description="DEAH box" evidence="1">
    <location>
        <begin position="144"/>
        <end position="147"/>
    </location>
</feature>
<feature type="binding site" evidence="1">
    <location>
        <position position="28"/>
    </location>
    <ligand>
        <name>ATP</name>
        <dbReference type="ChEBI" id="CHEBI:30616"/>
    </ligand>
</feature>
<feature type="binding site" evidence="1">
    <location>
        <begin position="46"/>
        <end position="53"/>
    </location>
    <ligand>
        <name>ATP</name>
        <dbReference type="ChEBI" id="CHEBI:30616"/>
    </ligand>
</feature>
<organism>
    <name type="scientific">Methanosarcina mazei (strain ATCC BAA-159 / DSM 3647 / Goe1 / Go1 / JCM 11833 / OCM 88)</name>
    <name type="common">Methanosarcina frisia</name>
    <dbReference type="NCBI Taxonomy" id="192952"/>
    <lineage>
        <taxon>Archaea</taxon>
        <taxon>Methanobacteriati</taxon>
        <taxon>Methanobacteriota</taxon>
        <taxon>Stenosarchaea group</taxon>
        <taxon>Methanomicrobia</taxon>
        <taxon>Methanosarcinales</taxon>
        <taxon>Methanosarcinaceae</taxon>
        <taxon>Methanosarcina</taxon>
    </lineage>
</organism>
<name>HELS_METMA</name>
<sequence length="730" mass="81074">MKIESLDLPDEIKRFYENSGILELYPPQAEAVEKGLLEGKNLLAAIPTASGKTLLAELAMLKSVLNGGKALYIVPLRALASEKFRRFQEFSVLGMRVGISTGDYDRRDEGLGINDIIVATSEKTDSLLRNETAWMQEISVVVADEVHLIDSPDRGPTLEITLSKLRRMNPSCQVLALSATVGNADELAAWLDAELVLSEWRPTDLMEGVFYNGIFYCKDKEKPVGQPTKDEAVNLVLDTIKEGGQCLVFESSRKNCMGFAKKAVSAVKKTLSNEDRETLAGIADEIIENSETDVSSVLATCVRSGTAFHHAGLTTPLRELVENGFREGRIKIISSTPTLAAGLNLPARRVIIRSYRRYSSDSGMQPIPVLEYKQMAGRAGRPRLDPYGEAVLLAKSYEEFVFLFEKYIEAGAEDIWSKLGTENALRTHILSTISNGFARTREELMDFLEATFFAFQYSNFGLSAVVDECLDFLRREGMLEKDPDALVSTVFGKLVSRLYIDPLSAALIAKGLREAGTLTELTLLHLICSTPDMRLMYMRSQDYQEVNDYVMAHAGEFSKVPNPFNIAEYEWFLGEVKTSLLLMDWIHEKPENEICLKFGIGEGDIHATADIAEWIMHVTAQLAGLLDLKGAKEASELEKRIRYGAAPELMDLLDIRSVGRVRARKLYEAGFKSTAELAAASPEHIAVLVGPKITERIFKQIGRREAVSEFSDIEPLEKGSSDGQRTISDY</sequence>
<gene>
    <name evidence="1" type="primary">hel308</name>
    <name type="ordered locus">MM_0425</name>
</gene>